<feature type="chain" id="PRO_0000086941" description="Embryonal Fyn-associated substrate">
    <location>
        <begin position="1"/>
        <end position="560"/>
    </location>
</feature>
<feature type="domain" description="SH3" evidence="2">
    <location>
        <begin position="5"/>
        <end position="68"/>
    </location>
</feature>
<feature type="region of interest" description="Disordered" evidence="3">
    <location>
        <begin position="176"/>
        <end position="219"/>
    </location>
</feature>
<feature type="region of interest" description="Disordered" evidence="3">
    <location>
        <begin position="241"/>
        <end position="372"/>
    </location>
</feature>
<feature type="region of interest" description="Divergent helix-loop-helix motif">
    <location>
        <begin position="437"/>
        <end position="487"/>
    </location>
</feature>
<feature type="short sequence motif" description="SH3-binding" evidence="1">
    <location>
        <begin position="304"/>
        <end position="310"/>
    </location>
</feature>
<feature type="short sequence motif" description="SH3-binding" evidence="1">
    <location>
        <begin position="334"/>
        <end position="340"/>
    </location>
</feature>
<feature type="compositionally biased region" description="Basic and acidic residues" evidence="3">
    <location>
        <begin position="198"/>
        <end position="210"/>
    </location>
</feature>
<feature type="compositionally biased region" description="Pro residues" evidence="3">
    <location>
        <begin position="259"/>
        <end position="268"/>
    </location>
</feature>
<feature type="compositionally biased region" description="Low complexity" evidence="3">
    <location>
        <begin position="305"/>
        <end position="315"/>
    </location>
</feature>
<feature type="compositionally biased region" description="Basic and acidic residues" evidence="3">
    <location>
        <begin position="351"/>
        <end position="361"/>
    </location>
</feature>
<feature type="modified residue" description="Phosphotyrosine; by SRC" evidence="4">
    <location>
        <position position="253"/>
    </location>
</feature>
<feature type="mutagenesis site" description="Diminishes the ability to induce SRC-mediated activation of luciferase." evidence="4">
    <original>Y</original>
    <variation>F</variation>
    <location>
        <position position="253"/>
    </location>
</feature>
<feature type="sequence conflict" description="In Ref. 1; AAB02246, 2; AAC52340 and 4; AAH05438." evidence="5" ref="1 2 4">
    <original>G</original>
    <variation>V</variation>
    <location>
        <position position="133"/>
    </location>
</feature>
<feature type="sequence conflict" description="In Ref. 1; AAB02246, 2; AAC52340 and 4; AAH05438." evidence="5" ref="1 2 4">
    <original>D</original>
    <variation>A</variation>
    <location>
        <position position="556"/>
    </location>
</feature>
<accession>Q64355</accession>
<accession>Q8BSX4</accession>
<dbReference type="EMBL" id="U57686">
    <property type="protein sequence ID" value="AAB02246.1"/>
    <property type="molecule type" value="mRNA"/>
</dbReference>
<dbReference type="EMBL" id="U28728">
    <property type="protein sequence ID" value="AAC52340.1"/>
    <property type="molecule type" value="mRNA"/>
</dbReference>
<dbReference type="EMBL" id="AK030321">
    <property type="protein sequence ID" value="BAC26900.1"/>
    <property type="molecule type" value="mRNA"/>
</dbReference>
<dbReference type="EMBL" id="AK163191">
    <property type="protein sequence ID" value="BAE37228.1"/>
    <property type="molecule type" value="mRNA"/>
</dbReference>
<dbReference type="EMBL" id="BC005438">
    <property type="protein sequence ID" value="AAH05438.1"/>
    <property type="molecule type" value="mRNA"/>
</dbReference>
<dbReference type="CCDS" id="CCDS36925.1"/>
<dbReference type="RefSeq" id="NP_034242.2">
    <property type="nucleotide sequence ID" value="NM_010112.4"/>
</dbReference>
<dbReference type="SMR" id="Q64355"/>
<dbReference type="BioGRID" id="199397">
    <property type="interactions" value="4"/>
</dbReference>
<dbReference type="FunCoup" id="Q64355">
    <property type="interactions" value="48"/>
</dbReference>
<dbReference type="IntAct" id="Q64355">
    <property type="interactions" value="2"/>
</dbReference>
<dbReference type="MINT" id="Q64355"/>
<dbReference type="STRING" id="10090.ENSMUSP00000022813"/>
<dbReference type="GlyGen" id="Q64355">
    <property type="glycosylation" value="1 site"/>
</dbReference>
<dbReference type="iPTMnet" id="Q64355"/>
<dbReference type="PhosphoSitePlus" id="Q64355"/>
<dbReference type="jPOST" id="Q64355"/>
<dbReference type="PaxDb" id="10090-ENSMUSP00000022813"/>
<dbReference type="PeptideAtlas" id="Q64355"/>
<dbReference type="ProteomicsDB" id="275446"/>
<dbReference type="Antibodypedia" id="22453">
    <property type="antibodies" value="74 antibodies from 22 providers"/>
</dbReference>
<dbReference type="DNASU" id="13644"/>
<dbReference type="Ensembl" id="ENSMUST00000022813.8">
    <property type="protein sequence ID" value="ENSMUSP00000022813.7"/>
    <property type="gene ID" value="ENSMUSG00000022203.8"/>
</dbReference>
<dbReference type="GeneID" id="13644"/>
<dbReference type="KEGG" id="mmu:13644"/>
<dbReference type="UCSC" id="uc007txm.2">
    <property type="organism name" value="mouse"/>
</dbReference>
<dbReference type="AGR" id="MGI:105311"/>
<dbReference type="CTD" id="10278"/>
<dbReference type="MGI" id="MGI:105311">
    <property type="gene designation" value="Efs"/>
</dbReference>
<dbReference type="VEuPathDB" id="HostDB:ENSMUSG00000022203"/>
<dbReference type="eggNOG" id="ENOG502QUFB">
    <property type="taxonomic scope" value="Eukaryota"/>
</dbReference>
<dbReference type="GeneTree" id="ENSGT00950000183008"/>
<dbReference type="HOGENOM" id="CLU_012582_1_0_1"/>
<dbReference type="InParanoid" id="Q64355"/>
<dbReference type="OMA" id="HRNEYEG"/>
<dbReference type="OrthoDB" id="5983572at2759"/>
<dbReference type="PhylomeDB" id="Q64355"/>
<dbReference type="TreeFam" id="TF328782"/>
<dbReference type="BioGRID-ORCS" id="13644">
    <property type="hits" value="4 hits in 76 CRISPR screens"/>
</dbReference>
<dbReference type="ChiTaRS" id="Efs">
    <property type="organism name" value="mouse"/>
</dbReference>
<dbReference type="PRO" id="PR:Q64355"/>
<dbReference type="Proteomes" id="UP000000589">
    <property type="component" value="Chromosome 14"/>
</dbReference>
<dbReference type="RNAct" id="Q64355">
    <property type="molecule type" value="protein"/>
</dbReference>
<dbReference type="Bgee" id="ENSMUSG00000022203">
    <property type="expression patterns" value="Expressed in choroid plexus of fourth ventricle and 215 other cell types or tissues"/>
</dbReference>
<dbReference type="ExpressionAtlas" id="Q64355">
    <property type="expression patterns" value="baseline and differential"/>
</dbReference>
<dbReference type="GO" id="GO:0017124">
    <property type="term" value="F:SH3 domain binding"/>
    <property type="evidence" value="ECO:0000314"/>
    <property type="project" value="MGI"/>
</dbReference>
<dbReference type="GO" id="GO:0007155">
    <property type="term" value="P:cell adhesion"/>
    <property type="evidence" value="ECO:0007669"/>
    <property type="project" value="UniProtKB-KW"/>
</dbReference>
<dbReference type="CDD" id="cd12003">
    <property type="entry name" value="SH3_EFS"/>
    <property type="match status" value="1"/>
</dbReference>
<dbReference type="FunFam" id="1.20.120.230:FF:000001">
    <property type="entry name" value="Breast cancer anti-estrogen resistance 1"/>
    <property type="match status" value="1"/>
</dbReference>
<dbReference type="FunFam" id="2.30.30.40:FF:000009">
    <property type="entry name" value="Breast cancer anti-estrogen resistance 1"/>
    <property type="match status" value="1"/>
</dbReference>
<dbReference type="Gene3D" id="1.20.120.230">
    <property type="entry name" value="Alpha-catenin/vinculin-like"/>
    <property type="match status" value="1"/>
</dbReference>
<dbReference type="Gene3D" id="2.30.30.40">
    <property type="entry name" value="SH3 Domains"/>
    <property type="match status" value="1"/>
</dbReference>
<dbReference type="InterPro" id="IPR021901">
    <property type="entry name" value="CAS_C"/>
</dbReference>
<dbReference type="InterPro" id="IPR037362">
    <property type="entry name" value="CAS_fam"/>
</dbReference>
<dbReference type="InterPro" id="IPR035747">
    <property type="entry name" value="EFS_SH3"/>
</dbReference>
<dbReference type="InterPro" id="IPR036028">
    <property type="entry name" value="SH3-like_dom_sf"/>
</dbReference>
<dbReference type="InterPro" id="IPR001452">
    <property type="entry name" value="SH3_domain"/>
</dbReference>
<dbReference type="PANTHER" id="PTHR10654">
    <property type="entry name" value="CAS SCAFFOLDING PROTEIN"/>
    <property type="match status" value="1"/>
</dbReference>
<dbReference type="PANTHER" id="PTHR10654:SF14">
    <property type="entry name" value="EMBRYONAL FYN-ASSOCIATED SUBSTRATE"/>
    <property type="match status" value="1"/>
</dbReference>
<dbReference type="Pfam" id="PF12026">
    <property type="entry name" value="CAS_C"/>
    <property type="match status" value="1"/>
</dbReference>
<dbReference type="Pfam" id="PF14604">
    <property type="entry name" value="SH3_9"/>
    <property type="match status" value="1"/>
</dbReference>
<dbReference type="PRINTS" id="PR00452">
    <property type="entry name" value="SH3DOMAIN"/>
</dbReference>
<dbReference type="SMART" id="SM00326">
    <property type="entry name" value="SH3"/>
    <property type="match status" value="1"/>
</dbReference>
<dbReference type="SUPFAM" id="SSF50044">
    <property type="entry name" value="SH3-domain"/>
    <property type="match status" value="1"/>
</dbReference>
<dbReference type="PROSITE" id="PS50002">
    <property type="entry name" value="SH3"/>
    <property type="match status" value="1"/>
</dbReference>
<reference key="1">
    <citation type="journal article" date="1996" name="Genes Dev.">
        <title>Coordinate activation of c-Src by SH3- and SH2-binding sites on a novel p130Cas-related protein, Sin.</title>
        <authorList>
            <person name="Alexandropoulos K."/>
            <person name="Baltimore D."/>
        </authorList>
    </citation>
    <scope>NUCLEOTIDE SEQUENCE [MRNA]</scope>
    <scope>PHOSPHORYLATION AT TYR-253</scope>
    <scope>MUTAGENESIS OF TYR-253</scope>
    <source>
        <tissue>Embryo</tissue>
    </source>
</reference>
<reference key="2">
    <citation type="journal article" date="1995" name="Oncogene">
        <title>Molecular cloning of a cDNA encoding a phosphoprotein, Efs, which contains a Src homology 3 domain and associates with Fyn.</title>
        <authorList>
            <person name="Ishino M."/>
            <person name="Ohba T."/>
            <person name="Sasaki H."/>
            <person name="Sasaki T."/>
        </authorList>
    </citation>
    <scope>NUCLEOTIDE SEQUENCE [MRNA]</scope>
    <source>
        <strain>NIH Swiss</strain>
        <tissue>Embryo</tissue>
    </source>
</reference>
<reference key="3">
    <citation type="journal article" date="2005" name="Science">
        <title>The transcriptional landscape of the mammalian genome.</title>
        <authorList>
            <person name="Carninci P."/>
            <person name="Kasukawa T."/>
            <person name="Katayama S."/>
            <person name="Gough J."/>
            <person name="Frith M.C."/>
            <person name="Maeda N."/>
            <person name="Oyama R."/>
            <person name="Ravasi T."/>
            <person name="Lenhard B."/>
            <person name="Wells C."/>
            <person name="Kodzius R."/>
            <person name="Shimokawa K."/>
            <person name="Bajic V.B."/>
            <person name="Brenner S.E."/>
            <person name="Batalov S."/>
            <person name="Forrest A.R."/>
            <person name="Zavolan M."/>
            <person name="Davis M.J."/>
            <person name="Wilming L.G."/>
            <person name="Aidinis V."/>
            <person name="Allen J.E."/>
            <person name="Ambesi-Impiombato A."/>
            <person name="Apweiler R."/>
            <person name="Aturaliya R.N."/>
            <person name="Bailey T.L."/>
            <person name="Bansal M."/>
            <person name="Baxter L."/>
            <person name="Beisel K.W."/>
            <person name="Bersano T."/>
            <person name="Bono H."/>
            <person name="Chalk A.M."/>
            <person name="Chiu K.P."/>
            <person name="Choudhary V."/>
            <person name="Christoffels A."/>
            <person name="Clutterbuck D.R."/>
            <person name="Crowe M.L."/>
            <person name="Dalla E."/>
            <person name="Dalrymple B.P."/>
            <person name="de Bono B."/>
            <person name="Della Gatta G."/>
            <person name="di Bernardo D."/>
            <person name="Down T."/>
            <person name="Engstrom P."/>
            <person name="Fagiolini M."/>
            <person name="Faulkner G."/>
            <person name="Fletcher C.F."/>
            <person name="Fukushima T."/>
            <person name="Furuno M."/>
            <person name="Futaki S."/>
            <person name="Gariboldi M."/>
            <person name="Georgii-Hemming P."/>
            <person name="Gingeras T.R."/>
            <person name="Gojobori T."/>
            <person name="Green R.E."/>
            <person name="Gustincich S."/>
            <person name="Harbers M."/>
            <person name="Hayashi Y."/>
            <person name="Hensch T.K."/>
            <person name="Hirokawa N."/>
            <person name="Hill D."/>
            <person name="Huminiecki L."/>
            <person name="Iacono M."/>
            <person name="Ikeo K."/>
            <person name="Iwama A."/>
            <person name="Ishikawa T."/>
            <person name="Jakt M."/>
            <person name="Kanapin A."/>
            <person name="Katoh M."/>
            <person name="Kawasawa Y."/>
            <person name="Kelso J."/>
            <person name="Kitamura H."/>
            <person name="Kitano H."/>
            <person name="Kollias G."/>
            <person name="Krishnan S.P."/>
            <person name="Kruger A."/>
            <person name="Kummerfeld S.K."/>
            <person name="Kurochkin I.V."/>
            <person name="Lareau L.F."/>
            <person name="Lazarevic D."/>
            <person name="Lipovich L."/>
            <person name="Liu J."/>
            <person name="Liuni S."/>
            <person name="McWilliam S."/>
            <person name="Madan Babu M."/>
            <person name="Madera M."/>
            <person name="Marchionni L."/>
            <person name="Matsuda H."/>
            <person name="Matsuzawa S."/>
            <person name="Miki H."/>
            <person name="Mignone F."/>
            <person name="Miyake S."/>
            <person name="Morris K."/>
            <person name="Mottagui-Tabar S."/>
            <person name="Mulder N."/>
            <person name="Nakano N."/>
            <person name="Nakauchi H."/>
            <person name="Ng P."/>
            <person name="Nilsson R."/>
            <person name="Nishiguchi S."/>
            <person name="Nishikawa S."/>
            <person name="Nori F."/>
            <person name="Ohara O."/>
            <person name="Okazaki Y."/>
            <person name="Orlando V."/>
            <person name="Pang K.C."/>
            <person name="Pavan W.J."/>
            <person name="Pavesi G."/>
            <person name="Pesole G."/>
            <person name="Petrovsky N."/>
            <person name="Piazza S."/>
            <person name="Reed J."/>
            <person name="Reid J.F."/>
            <person name="Ring B.Z."/>
            <person name="Ringwald M."/>
            <person name="Rost B."/>
            <person name="Ruan Y."/>
            <person name="Salzberg S.L."/>
            <person name="Sandelin A."/>
            <person name="Schneider C."/>
            <person name="Schoenbach C."/>
            <person name="Sekiguchi K."/>
            <person name="Semple C.A."/>
            <person name="Seno S."/>
            <person name="Sessa L."/>
            <person name="Sheng Y."/>
            <person name="Shibata Y."/>
            <person name="Shimada H."/>
            <person name="Shimada K."/>
            <person name="Silva D."/>
            <person name="Sinclair B."/>
            <person name="Sperling S."/>
            <person name="Stupka E."/>
            <person name="Sugiura K."/>
            <person name="Sultana R."/>
            <person name="Takenaka Y."/>
            <person name="Taki K."/>
            <person name="Tammoja K."/>
            <person name="Tan S.L."/>
            <person name="Tang S."/>
            <person name="Taylor M.S."/>
            <person name="Tegner J."/>
            <person name="Teichmann S.A."/>
            <person name="Ueda H.R."/>
            <person name="van Nimwegen E."/>
            <person name="Verardo R."/>
            <person name="Wei C.L."/>
            <person name="Yagi K."/>
            <person name="Yamanishi H."/>
            <person name="Zabarovsky E."/>
            <person name="Zhu S."/>
            <person name="Zimmer A."/>
            <person name="Hide W."/>
            <person name="Bult C."/>
            <person name="Grimmond S.M."/>
            <person name="Teasdale R.D."/>
            <person name="Liu E.T."/>
            <person name="Brusic V."/>
            <person name="Quackenbush J."/>
            <person name="Wahlestedt C."/>
            <person name="Mattick J.S."/>
            <person name="Hume D.A."/>
            <person name="Kai C."/>
            <person name="Sasaki D."/>
            <person name="Tomaru Y."/>
            <person name="Fukuda S."/>
            <person name="Kanamori-Katayama M."/>
            <person name="Suzuki M."/>
            <person name="Aoki J."/>
            <person name="Arakawa T."/>
            <person name="Iida J."/>
            <person name="Imamura K."/>
            <person name="Itoh M."/>
            <person name="Kato T."/>
            <person name="Kawaji H."/>
            <person name="Kawagashira N."/>
            <person name="Kawashima T."/>
            <person name="Kojima M."/>
            <person name="Kondo S."/>
            <person name="Konno H."/>
            <person name="Nakano K."/>
            <person name="Ninomiya N."/>
            <person name="Nishio T."/>
            <person name="Okada M."/>
            <person name="Plessy C."/>
            <person name="Shibata K."/>
            <person name="Shiraki T."/>
            <person name="Suzuki S."/>
            <person name="Tagami M."/>
            <person name="Waki K."/>
            <person name="Watahiki A."/>
            <person name="Okamura-Oho Y."/>
            <person name="Suzuki H."/>
            <person name="Kawai J."/>
            <person name="Hayashizaki Y."/>
        </authorList>
    </citation>
    <scope>NUCLEOTIDE SEQUENCE [LARGE SCALE MRNA]</scope>
    <source>
        <strain>C57BL/6J</strain>
        <tissue>Cerebellum</tissue>
        <tissue>Ovary</tissue>
        <tissue>Uterus</tissue>
    </source>
</reference>
<reference key="4">
    <citation type="journal article" date="2004" name="Genome Res.">
        <title>The status, quality, and expansion of the NIH full-length cDNA project: the Mammalian Gene Collection (MGC).</title>
        <authorList>
            <consortium name="The MGC Project Team"/>
        </authorList>
    </citation>
    <scope>NUCLEOTIDE SEQUENCE [LARGE SCALE MRNA]</scope>
    <source>
        <strain>C57BL/6J</strain>
        <tissue>Mammary gland</tissue>
    </source>
</reference>
<reference key="5">
    <citation type="journal article" date="2010" name="Cell">
        <title>A tissue-specific atlas of mouse protein phosphorylation and expression.</title>
        <authorList>
            <person name="Huttlin E.L."/>
            <person name="Jedrychowski M.P."/>
            <person name="Elias J.E."/>
            <person name="Goswami T."/>
            <person name="Rad R."/>
            <person name="Beausoleil S.A."/>
            <person name="Villen J."/>
            <person name="Haas W."/>
            <person name="Sowa M.E."/>
            <person name="Gygi S.P."/>
        </authorList>
    </citation>
    <scope>IDENTIFICATION BY MASS SPECTROMETRY [LARGE SCALE ANALYSIS]</scope>
    <source>
        <tissue>Lung</tissue>
    </source>
</reference>
<sequence length="560" mass="58973">MAIATSAQLARALYDNTAESPQELSFRRGDVLRVLQREGAGGLDGWCLCSLHGQQGIVPANRVKLLPAGPAPKPSLCPASPTQPGSSCPTPERGCEEQEVYVIPPPARPCSASGLPARSCSPSSDSIYKVPRGNGMQLTASRDVAEVYDVPPNILRAPSSCPYDSPASFSCPVAPVVPQPPREDEAPYDVPLALKPPAELERDPEWEGGREPGPPLYAAPSNLKRASALLNLYEAPEELLANGESRDADEGIYDVPLLGPEPPSPEPPVASSSTDLDTVAQLPTRSSPPQHRPRLPSTESLSRRPLPALPVSEAPAPSPAPSPAPGRKGSIQDRPLPPPPPCLPGYGGLKPEGDPECREVANDPAGPHNEYEGIPMAEEYDYVHLKGVDTAQGSRPLDKAFPVDPELLERGLAERKEALSPEEPLVLSTGDLQLLHFYAGQCQSHYSALQAAVAALVASTQANQPPCLFVPHGKRVVVAAHRLVFVGDTLGRLAASAALRAQVGAAGTMLAQTLRATVLAVKGAALGYPSDTAVQEMARCVAELAGQALRFTTLLDGLLP</sequence>
<evidence type="ECO:0000255" key="1"/>
<evidence type="ECO:0000255" key="2">
    <source>
        <dbReference type="PROSITE-ProRule" id="PRU00192"/>
    </source>
</evidence>
<evidence type="ECO:0000256" key="3">
    <source>
        <dbReference type="SAM" id="MobiDB-lite"/>
    </source>
</evidence>
<evidence type="ECO:0000269" key="4">
    <source>
    </source>
</evidence>
<evidence type="ECO:0000305" key="5"/>
<protein>
    <recommendedName>
        <fullName>Embryonal Fyn-associated substrate</fullName>
    </recommendedName>
    <alternativeName>
        <fullName>SRC-interacting protein</fullName>
    </alternativeName>
    <alternativeName>
        <fullName>Signal-integrating protein</fullName>
    </alternativeName>
</protein>
<proteinExistence type="evidence at protein level"/>
<gene>
    <name type="primary">Efs</name>
    <name type="synonym">Sin</name>
</gene>
<organism>
    <name type="scientific">Mus musculus</name>
    <name type="common">Mouse</name>
    <dbReference type="NCBI Taxonomy" id="10090"/>
    <lineage>
        <taxon>Eukaryota</taxon>
        <taxon>Metazoa</taxon>
        <taxon>Chordata</taxon>
        <taxon>Craniata</taxon>
        <taxon>Vertebrata</taxon>
        <taxon>Euteleostomi</taxon>
        <taxon>Mammalia</taxon>
        <taxon>Eutheria</taxon>
        <taxon>Euarchontoglires</taxon>
        <taxon>Glires</taxon>
        <taxon>Rodentia</taxon>
        <taxon>Myomorpha</taxon>
        <taxon>Muroidea</taxon>
        <taxon>Muridae</taxon>
        <taxon>Murinae</taxon>
        <taxon>Mus</taxon>
        <taxon>Mus</taxon>
    </lineage>
</organism>
<keyword id="KW-0130">Cell adhesion</keyword>
<keyword id="KW-0597">Phosphoprotein</keyword>
<keyword id="KW-1185">Reference proteome</keyword>
<keyword id="KW-0728">SH3 domain</keyword>
<keyword id="KW-0729">SH3-binding</keyword>
<name>EFS_MOUSE</name>
<comment type="function">
    <text>Docking protein which plays a central coordinating role for tyrosine-kinase-based signaling related to cell adhesion. May serve as an activator of SRC and a downstream effector. Interacts with the SH3 domain of FYN and with CRK, SRC, and YES.</text>
</comment>
<comment type="tissue specificity">
    <text>Widely expressed. Higher levels found in placenta and embryo. Lower levels found in brain, brainstem, muscle and lung. No expression in liver and intestine.</text>
</comment>
<comment type="domain">
    <text>Contains a central domain (substrate domain) containing multiple potential SH2-binding sites and a C-terminal domain containing a divergent helix-loop-helix (HLH) motif. The SH2-binding sites putatively bind CRK, NCK and ABL SH2 domains.</text>
</comment>
<comment type="domain">
    <text>The SH3-binding sites that bind to the SRC SH3 domain are required for interaction with CRK and are implicated in promotion of serum response element (SRE) activation. The SH3 domain interacts with PTK2/FAK1.</text>
</comment>
<comment type="PTM">
    <text evidence="4">Phosphorylated on multiple tyrosine residues. Phosphorylated on tyrosines by FYN and SRC.</text>
</comment>
<comment type="similarity">
    <text evidence="5">Belongs to the CAS family.</text>
</comment>